<accession>Q4ZL24</accession>
<name>ATPB_PSEU2</name>
<comment type="function">
    <text evidence="1">Produces ATP from ADP in the presence of a proton gradient across the membrane. The catalytic sites are hosted primarily by the beta subunits.</text>
</comment>
<comment type="catalytic activity">
    <reaction evidence="1">
        <text>ATP + H2O + 4 H(+)(in) = ADP + phosphate + 5 H(+)(out)</text>
        <dbReference type="Rhea" id="RHEA:57720"/>
        <dbReference type="ChEBI" id="CHEBI:15377"/>
        <dbReference type="ChEBI" id="CHEBI:15378"/>
        <dbReference type="ChEBI" id="CHEBI:30616"/>
        <dbReference type="ChEBI" id="CHEBI:43474"/>
        <dbReference type="ChEBI" id="CHEBI:456216"/>
        <dbReference type="EC" id="7.1.2.2"/>
    </reaction>
</comment>
<comment type="subunit">
    <text evidence="1">F-type ATPases have 2 components, CF(1) - the catalytic core - and CF(0) - the membrane proton channel. CF(1) has five subunits: alpha(3), beta(3), gamma(1), delta(1), epsilon(1). CF(0) has three main subunits: a(1), b(2) and c(9-12). The alpha and beta chains form an alternating ring which encloses part of the gamma chain. CF(1) is attached to CF(0) by a central stalk formed by the gamma and epsilon chains, while a peripheral stalk is formed by the delta and b chains.</text>
</comment>
<comment type="subcellular location">
    <subcellularLocation>
        <location evidence="1">Cell inner membrane</location>
        <topology evidence="1">Peripheral membrane protein</topology>
    </subcellularLocation>
</comment>
<comment type="similarity">
    <text evidence="1">Belongs to the ATPase alpha/beta chains family.</text>
</comment>
<dbReference type="EC" id="7.1.2.2" evidence="1"/>
<dbReference type="EMBL" id="CP000075">
    <property type="protein sequence ID" value="AAY40148.1"/>
    <property type="molecule type" value="Genomic_DNA"/>
</dbReference>
<dbReference type="RefSeq" id="WP_002555982.1">
    <property type="nucleotide sequence ID" value="NC_007005.1"/>
</dbReference>
<dbReference type="RefSeq" id="YP_238186.1">
    <property type="nucleotide sequence ID" value="NC_007005.1"/>
</dbReference>
<dbReference type="SMR" id="Q4ZL24"/>
<dbReference type="STRING" id="205918.Psyr_5121"/>
<dbReference type="GeneID" id="96221649"/>
<dbReference type="KEGG" id="psb:Psyr_5121"/>
<dbReference type="PATRIC" id="fig|205918.7.peg.5282"/>
<dbReference type="eggNOG" id="COG0055">
    <property type="taxonomic scope" value="Bacteria"/>
</dbReference>
<dbReference type="HOGENOM" id="CLU_022398_0_2_6"/>
<dbReference type="OrthoDB" id="9801639at2"/>
<dbReference type="Proteomes" id="UP000000426">
    <property type="component" value="Chromosome"/>
</dbReference>
<dbReference type="GO" id="GO:0005886">
    <property type="term" value="C:plasma membrane"/>
    <property type="evidence" value="ECO:0007669"/>
    <property type="project" value="UniProtKB-SubCell"/>
</dbReference>
<dbReference type="GO" id="GO:0045259">
    <property type="term" value="C:proton-transporting ATP synthase complex"/>
    <property type="evidence" value="ECO:0007669"/>
    <property type="project" value="UniProtKB-KW"/>
</dbReference>
<dbReference type="GO" id="GO:0005524">
    <property type="term" value="F:ATP binding"/>
    <property type="evidence" value="ECO:0007669"/>
    <property type="project" value="UniProtKB-UniRule"/>
</dbReference>
<dbReference type="GO" id="GO:0016887">
    <property type="term" value="F:ATP hydrolysis activity"/>
    <property type="evidence" value="ECO:0007669"/>
    <property type="project" value="InterPro"/>
</dbReference>
<dbReference type="GO" id="GO:0046933">
    <property type="term" value="F:proton-transporting ATP synthase activity, rotational mechanism"/>
    <property type="evidence" value="ECO:0007669"/>
    <property type="project" value="UniProtKB-UniRule"/>
</dbReference>
<dbReference type="CDD" id="cd18110">
    <property type="entry name" value="ATP-synt_F1_beta_C"/>
    <property type="match status" value="1"/>
</dbReference>
<dbReference type="CDD" id="cd18115">
    <property type="entry name" value="ATP-synt_F1_beta_N"/>
    <property type="match status" value="1"/>
</dbReference>
<dbReference type="CDD" id="cd01133">
    <property type="entry name" value="F1-ATPase_beta_CD"/>
    <property type="match status" value="1"/>
</dbReference>
<dbReference type="FunFam" id="1.10.1140.10:FF:000001">
    <property type="entry name" value="ATP synthase subunit beta"/>
    <property type="match status" value="1"/>
</dbReference>
<dbReference type="FunFam" id="2.40.10.170:FF:000005">
    <property type="entry name" value="ATP synthase subunit beta"/>
    <property type="match status" value="1"/>
</dbReference>
<dbReference type="FunFam" id="3.40.50.300:FF:000004">
    <property type="entry name" value="ATP synthase subunit beta"/>
    <property type="match status" value="1"/>
</dbReference>
<dbReference type="Gene3D" id="2.40.10.170">
    <property type="match status" value="1"/>
</dbReference>
<dbReference type="Gene3D" id="1.10.1140.10">
    <property type="entry name" value="Bovine Mitochondrial F1-atpase, Atp Synthase Beta Chain, Chain D, domain 3"/>
    <property type="match status" value="1"/>
</dbReference>
<dbReference type="Gene3D" id="3.40.50.300">
    <property type="entry name" value="P-loop containing nucleotide triphosphate hydrolases"/>
    <property type="match status" value="1"/>
</dbReference>
<dbReference type="HAMAP" id="MF_01347">
    <property type="entry name" value="ATP_synth_beta_bact"/>
    <property type="match status" value="1"/>
</dbReference>
<dbReference type="InterPro" id="IPR003593">
    <property type="entry name" value="AAA+_ATPase"/>
</dbReference>
<dbReference type="InterPro" id="IPR055190">
    <property type="entry name" value="ATP-synt_VA_C"/>
</dbReference>
<dbReference type="InterPro" id="IPR005722">
    <property type="entry name" value="ATP_synth_F1_bsu"/>
</dbReference>
<dbReference type="InterPro" id="IPR020003">
    <property type="entry name" value="ATPase_a/bsu_AS"/>
</dbReference>
<dbReference type="InterPro" id="IPR050053">
    <property type="entry name" value="ATPase_alpha/beta_chains"/>
</dbReference>
<dbReference type="InterPro" id="IPR004100">
    <property type="entry name" value="ATPase_F1/V1/A1_a/bsu_N"/>
</dbReference>
<dbReference type="InterPro" id="IPR036121">
    <property type="entry name" value="ATPase_F1/V1/A1_a/bsu_N_sf"/>
</dbReference>
<dbReference type="InterPro" id="IPR000194">
    <property type="entry name" value="ATPase_F1/V1/A1_a/bsu_nucl-bd"/>
</dbReference>
<dbReference type="InterPro" id="IPR024034">
    <property type="entry name" value="ATPase_F1/V1_b/a_C"/>
</dbReference>
<dbReference type="InterPro" id="IPR027417">
    <property type="entry name" value="P-loop_NTPase"/>
</dbReference>
<dbReference type="NCBIfam" id="TIGR01039">
    <property type="entry name" value="atpD"/>
    <property type="match status" value="1"/>
</dbReference>
<dbReference type="PANTHER" id="PTHR15184">
    <property type="entry name" value="ATP SYNTHASE"/>
    <property type="match status" value="1"/>
</dbReference>
<dbReference type="PANTHER" id="PTHR15184:SF71">
    <property type="entry name" value="ATP SYNTHASE SUBUNIT BETA, MITOCHONDRIAL"/>
    <property type="match status" value="1"/>
</dbReference>
<dbReference type="Pfam" id="PF00006">
    <property type="entry name" value="ATP-synt_ab"/>
    <property type="match status" value="1"/>
</dbReference>
<dbReference type="Pfam" id="PF02874">
    <property type="entry name" value="ATP-synt_ab_N"/>
    <property type="match status" value="1"/>
</dbReference>
<dbReference type="Pfam" id="PF22919">
    <property type="entry name" value="ATP-synt_VA_C"/>
    <property type="match status" value="1"/>
</dbReference>
<dbReference type="SMART" id="SM00382">
    <property type="entry name" value="AAA"/>
    <property type="match status" value="1"/>
</dbReference>
<dbReference type="SUPFAM" id="SSF47917">
    <property type="entry name" value="C-terminal domain of alpha and beta subunits of F1 ATP synthase"/>
    <property type="match status" value="1"/>
</dbReference>
<dbReference type="SUPFAM" id="SSF50615">
    <property type="entry name" value="N-terminal domain of alpha and beta subunits of F1 ATP synthase"/>
    <property type="match status" value="1"/>
</dbReference>
<dbReference type="SUPFAM" id="SSF52540">
    <property type="entry name" value="P-loop containing nucleoside triphosphate hydrolases"/>
    <property type="match status" value="1"/>
</dbReference>
<dbReference type="PROSITE" id="PS00152">
    <property type="entry name" value="ATPASE_ALPHA_BETA"/>
    <property type="match status" value="1"/>
</dbReference>
<evidence type="ECO:0000255" key="1">
    <source>
        <dbReference type="HAMAP-Rule" id="MF_01347"/>
    </source>
</evidence>
<feature type="chain" id="PRO_0000254343" description="ATP synthase subunit beta">
    <location>
        <begin position="1"/>
        <end position="459"/>
    </location>
</feature>
<feature type="binding site" evidence="1">
    <location>
        <begin position="149"/>
        <end position="156"/>
    </location>
    <ligand>
        <name>ATP</name>
        <dbReference type="ChEBI" id="CHEBI:30616"/>
    </ligand>
</feature>
<gene>
    <name evidence="1" type="primary">atpD</name>
    <name type="ordered locus">Psyr_5121</name>
</gene>
<organism>
    <name type="scientific">Pseudomonas syringae pv. syringae (strain B728a)</name>
    <dbReference type="NCBI Taxonomy" id="205918"/>
    <lineage>
        <taxon>Bacteria</taxon>
        <taxon>Pseudomonadati</taxon>
        <taxon>Pseudomonadota</taxon>
        <taxon>Gammaproteobacteria</taxon>
        <taxon>Pseudomonadales</taxon>
        <taxon>Pseudomonadaceae</taxon>
        <taxon>Pseudomonas</taxon>
        <taxon>Pseudomonas syringae</taxon>
    </lineage>
</organism>
<protein>
    <recommendedName>
        <fullName evidence="1">ATP synthase subunit beta</fullName>
        <ecNumber evidence="1">7.1.2.2</ecNumber>
    </recommendedName>
    <alternativeName>
        <fullName evidence="1">ATP synthase F1 sector subunit beta</fullName>
    </alternativeName>
    <alternativeName>
        <fullName evidence="1">F-ATPase subunit beta</fullName>
    </alternativeName>
</protein>
<sequence>MSSGRIVQIIGAVIDVEFPRDSVPSIYNALEVQSAAGTTLEVQQQLGDGVVRTIAMGSTEGLKRGLEVTDSGAAISVPVGKATLGRIMDVLGNPIDEAGPIATEERWGIHRPAPSFAEQAGGNDLLETGIKVIDLVCPFAKGGKVGLFGGAGVGKTVNMMELIRNIAIEHSGYSVFAGVGERTREGNDFYHEMKDSNVLDKVALVYGQMNEPPGNRLRVALTGLTMAEKFRDEGNDVLLFVDNIYRYTLAGTEVSALLGRMPSAVGYQPTLAEEMGTLQERITSTKNGSITSIQAVYVPADDLTDPSPATTFAHLDATVVLSRDIASLGIYPAVDPLDSTSRQLDPNVIGQEHYDTARGVQYVLQRYKELKDIIAILGMDELSETDKQLVNRARKIQRFLSQPFFVAEVFTGASGKYVSLKDTIAGFKGILNGDYDHLPEQAFYMVGGIEEAIEKAKKL</sequence>
<proteinExistence type="inferred from homology"/>
<reference key="1">
    <citation type="journal article" date="2005" name="Proc. Natl. Acad. Sci. U.S.A.">
        <title>Comparison of the complete genome sequences of Pseudomonas syringae pv. syringae B728a and pv. tomato DC3000.</title>
        <authorList>
            <person name="Feil H."/>
            <person name="Feil W.S."/>
            <person name="Chain P."/>
            <person name="Larimer F."/>
            <person name="Dibartolo G."/>
            <person name="Copeland A."/>
            <person name="Lykidis A."/>
            <person name="Trong S."/>
            <person name="Nolan M."/>
            <person name="Goltsman E."/>
            <person name="Thiel J."/>
            <person name="Malfatti S."/>
            <person name="Loper J.E."/>
            <person name="Lapidus A."/>
            <person name="Detter J.C."/>
            <person name="Land M."/>
            <person name="Richardson P.M."/>
            <person name="Kyrpides N.C."/>
            <person name="Ivanova N."/>
            <person name="Lindow S.E."/>
        </authorList>
    </citation>
    <scope>NUCLEOTIDE SEQUENCE [LARGE SCALE GENOMIC DNA]</scope>
    <source>
        <strain>B728a</strain>
    </source>
</reference>
<keyword id="KW-0066">ATP synthesis</keyword>
<keyword id="KW-0067">ATP-binding</keyword>
<keyword id="KW-0997">Cell inner membrane</keyword>
<keyword id="KW-1003">Cell membrane</keyword>
<keyword id="KW-0139">CF(1)</keyword>
<keyword id="KW-0375">Hydrogen ion transport</keyword>
<keyword id="KW-0406">Ion transport</keyword>
<keyword id="KW-0472">Membrane</keyword>
<keyword id="KW-0547">Nucleotide-binding</keyword>
<keyword id="KW-1278">Translocase</keyword>
<keyword id="KW-0813">Transport</keyword>